<gene>
    <name evidence="1" type="primary">rpmF</name>
    <name type="ordered locus">Ecaj_0576</name>
</gene>
<proteinExistence type="inferred from homology"/>
<dbReference type="EMBL" id="CP000107">
    <property type="protein sequence ID" value="AAZ68610.1"/>
    <property type="molecule type" value="Genomic_DNA"/>
</dbReference>
<dbReference type="RefSeq" id="WP_011304688.1">
    <property type="nucleotide sequence ID" value="NC_007354.1"/>
</dbReference>
<dbReference type="SMR" id="Q3YRP5"/>
<dbReference type="FunCoup" id="Q3YRP5">
    <property type="interactions" value="102"/>
</dbReference>
<dbReference type="STRING" id="269484.Ecaj_0576"/>
<dbReference type="KEGG" id="ecn:Ecaj_0576"/>
<dbReference type="eggNOG" id="COG0333">
    <property type="taxonomic scope" value="Bacteria"/>
</dbReference>
<dbReference type="HOGENOM" id="CLU_129084_2_0_5"/>
<dbReference type="InParanoid" id="Q3YRP5"/>
<dbReference type="Proteomes" id="UP000000435">
    <property type="component" value="Chromosome"/>
</dbReference>
<dbReference type="GO" id="GO:0015934">
    <property type="term" value="C:large ribosomal subunit"/>
    <property type="evidence" value="ECO:0007669"/>
    <property type="project" value="InterPro"/>
</dbReference>
<dbReference type="GO" id="GO:0003735">
    <property type="term" value="F:structural constituent of ribosome"/>
    <property type="evidence" value="ECO:0007669"/>
    <property type="project" value="InterPro"/>
</dbReference>
<dbReference type="GO" id="GO:0006412">
    <property type="term" value="P:translation"/>
    <property type="evidence" value="ECO:0007669"/>
    <property type="project" value="UniProtKB-UniRule"/>
</dbReference>
<dbReference type="Gene3D" id="1.20.5.640">
    <property type="entry name" value="Single helix bin"/>
    <property type="match status" value="1"/>
</dbReference>
<dbReference type="HAMAP" id="MF_00340">
    <property type="entry name" value="Ribosomal_bL32"/>
    <property type="match status" value="1"/>
</dbReference>
<dbReference type="InterPro" id="IPR002677">
    <property type="entry name" value="Ribosomal_bL32"/>
</dbReference>
<dbReference type="InterPro" id="IPR044957">
    <property type="entry name" value="Ribosomal_bL32_bact"/>
</dbReference>
<dbReference type="InterPro" id="IPR011332">
    <property type="entry name" value="Ribosomal_zn-bd"/>
</dbReference>
<dbReference type="NCBIfam" id="TIGR01031">
    <property type="entry name" value="rpmF_bact"/>
    <property type="match status" value="1"/>
</dbReference>
<dbReference type="PANTHER" id="PTHR35534">
    <property type="entry name" value="50S RIBOSOMAL PROTEIN L32"/>
    <property type="match status" value="1"/>
</dbReference>
<dbReference type="PANTHER" id="PTHR35534:SF1">
    <property type="entry name" value="LARGE RIBOSOMAL SUBUNIT PROTEIN BL32"/>
    <property type="match status" value="1"/>
</dbReference>
<dbReference type="Pfam" id="PF01783">
    <property type="entry name" value="Ribosomal_L32p"/>
    <property type="match status" value="1"/>
</dbReference>
<dbReference type="SUPFAM" id="SSF57829">
    <property type="entry name" value="Zn-binding ribosomal proteins"/>
    <property type="match status" value="1"/>
</dbReference>
<reference key="1">
    <citation type="journal article" date="2006" name="J. Bacteriol.">
        <title>The genome of the obligately intracellular bacterium Ehrlichia canis reveals themes of complex membrane structure and immune evasion strategies.</title>
        <authorList>
            <person name="Mavromatis K."/>
            <person name="Doyle C.K."/>
            <person name="Lykidis A."/>
            <person name="Ivanova N."/>
            <person name="Francino M.P."/>
            <person name="Chain P."/>
            <person name="Shin M."/>
            <person name="Malfatti S."/>
            <person name="Larimer F."/>
            <person name="Copeland A."/>
            <person name="Detter J.C."/>
            <person name="Land M."/>
            <person name="Richardson P.M."/>
            <person name="Yu X.J."/>
            <person name="Walker D.H."/>
            <person name="McBride J.W."/>
            <person name="Kyrpides N.C."/>
        </authorList>
    </citation>
    <scope>NUCLEOTIDE SEQUENCE [LARGE SCALE GENOMIC DNA]</scope>
    <source>
        <strain>Jake</strain>
    </source>
</reference>
<accession>Q3YRP5</accession>
<keyword id="KW-0687">Ribonucleoprotein</keyword>
<keyword id="KW-0689">Ribosomal protein</keyword>
<feature type="chain" id="PRO_0000225721" description="Large ribosomal subunit protein bL32">
    <location>
        <begin position="1"/>
        <end position="61"/>
    </location>
</feature>
<protein>
    <recommendedName>
        <fullName evidence="1">Large ribosomal subunit protein bL32</fullName>
    </recommendedName>
    <alternativeName>
        <fullName evidence="2">50S ribosomal protein L32</fullName>
    </alternativeName>
</protein>
<name>RL32_EHRCJ</name>
<comment type="similarity">
    <text evidence="1">Belongs to the bacterial ribosomal protein bL32 family.</text>
</comment>
<evidence type="ECO:0000255" key="1">
    <source>
        <dbReference type="HAMAP-Rule" id="MF_00340"/>
    </source>
</evidence>
<evidence type="ECO:0000305" key="2"/>
<organism>
    <name type="scientific">Ehrlichia canis (strain Jake)</name>
    <dbReference type="NCBI Taxonomy" id="269484"/>
    <lineage>
        <taxon>Bacteria</taxon>
        <taxon>Pseudomonadati</taxon>
        <taxon>Pseudomonadota</taxon>
        <taxon>Alphaproteobacteria</taxon>
        <taxon>Rickettsiales</taxon>
        <taxon>Anaplasmataceae</taxon>
        <taxon>Ehrlichia</taxon>
    </lineage>
</organism>
<sequence>MAVPKRKKSKSRRNMHRSHCRLRVPNIGIDKTTGEYKLSHHICLGGYYNEKQVLEVDTSGV</sequence>